<organism>
    <name type="scientific">Lottia gigantea</name>
    <name type="common">Giant owl limpet</name>
    <dbReference type="NCBI Taxonomy" id="225164"/>
    <lineage>
        <taxon>Eukaryota</taxon>
        <taxon>Metazoa</taxon>
        <taxon>Spiralia</taxon>
        <taxon>Lophotrochozoa</taxon>
        <taxon>Mollusca</taxon>
        <taxon>Gastropoda</taxon>
        <taxon>Patellogastropoda</taxon>
        <taxon>Lottioidea</taxon>
        <taxon>Lottiidae</taxon>
        <taxon>Lottia</taxon>
    </lineage>
</organism>
<sequence>MVIKTSLTVLILGVLIAEVFCAGHSQCNRRENPVNPFSYYETVNGKETLRMCPAAQIFNKTSCHCNAVEVVPGSGMNFRSGQQNFQWSSSGSSGGGMGASGMGANGMVASGIGASGIGTSGMGASNTNAMMNAFLGGSKAGSGNIATSGTSSGKFKVTLPFNPLILKWTKSSNGGWGAETGSSGGMNSQSSGSQSGSWGSSSGSWGGSSGSMGSSGNWLNDLQFMGNMRPQGINFPAPIMNIKVSGTGGSSQGVLRAARPHP</sequence>
<name>GSP1_LOTGI</name>
<keyword id="KW-0903">Direct protein sequencing</keyword>
<keyword id="KW-0325">Glycoprotein</keyword>
<keyword id="KW-0964">Secreted</keyword>
<keyword id="KW-0732">Signal</keyword>
<reference evidence="5" key="1">
    <citation type="submission" date="2007-12" db="EMBL/GenBank/DDBJ databases">
        <title>DOE Joint Genome Institute Lottia gigantea EST project.</title>
        <authorList>
            <person name="Richardson P."/>
            <person name="Lucas S."/>
            <person name="Rokhsar D."/>
            <person name="Wang M."/>
            <person name="Lindquist E.A."/>
        </authorList>
    </citation>
    <scope>NUCLEOTIDE SEQUENCE [LARGE SCALE MRNA]</scope>
    <scope>IDENTIFICATION</scope>
    <source>
        <tissue evidence="4">Larva</tissue>
    </source>
</reference>
<reference key="2">
    <citation type="journal article" date="2013" name="FEBS J.">
        <title>The shell-forming proteome of Lottia gigantea reveals both deep conservations and lineage-specific novelties.</title>
        <authorList>
            <person name="Marie B."/>
            <person name="Jackson D.J."/>
            <person name="Ramos-Silva P."/>
            <person name="Zanella-Cleon I."/>
            <person name="Guichard N."/>
            <person name="Marin F."/>
        </authorList>
    </citation>
    <scope>PROTEIN SEQUENCE OF 49-97 AND 158-185</scope>
    <scope>SUBCELLULAR LOCATION</scope>
    <scope>TISSUE SPECIFICITY</scope>
    <source>
        <tissue>Shell</tissue>
    </source>
</reference>
<dbReference type="EMBL" id="FC770867">
    <property type="status" value="NOT_ANNOTATED_CDS"/>
    <property type="molecule type" value="mRNA"/>
</dbReference>
<dbReference type="GO" id="GO:0005576">
    <property type="term" value="C:extracellular region"/>
    <property type="evidence" value="ECO:0007669"/>
    <property type="project" value="UniProtKB-SubCell"/>
</dbReference>
<comment type="subcellular location">
    <subcellularLocation>
        <location evidence="3">Secreted</location>
    </subcellularLocation>
</comment>
<comment type="tissue specificity">
    <text evidence="3">Component of the acid-insoluble and acid-soluble organic matrix of calcified layers of the shell (at protein level).</text>
</comment>
<evidence type="ECO:0000255" key="1"/>
<evidence type="ECO:0000256" key="2">
    <source>
        <dbReference type="SAM" id="MobiDB-lite"/>
    </source>
</evidence>
<evidence type="ECO:0000269" key="3">
    <source>
    </source>
</evidence>
<evidence type="ECO:0000269" key="4">
    <source ref="1"/>
</evidence>
<evidence type="ECO:0000305" key="5"/>
<feature type="signal peptide" evidence="1">
    <location>
        <begin position="1"/>
        <end position="21"/>
    </location>
</feature>
<feature type="chain" id="PRO_0000415249" description="Glycine and serine-rich protein 1" evidence="1">
    <location>
        <begin position="22"/>
        <end position="262"/>
    </location>
</feature>
<feature type="region of interest" description="Disordered" evidence="2">
    <location>
        <begin position="172"/>
        <end position="212"/>
    </location>
</feature>
<feature type="compositionally biased region" description="Gly residues" evidence="2">
    <location>
        <begin position="174"/>
        <end position="184"/>
    </location>
</feature>
<feature type="compositionally biased region" description="Low complexity" evidence="2">
    <location>
        <begin position="185"/>
        <end position="203"/>
    </location>
</feature>
<feature type="glycosylation site" description="N-linked (GlcNAc...) asparagine" evidence="1">
    <location>
        <position position="59"/>
    </location>
</feature>
<feature type="non-terminal residue" evidence="5">
    <location>
        <position position="262"/>
    </location>
</feature>
<accession>B3A0P6</accession>
<protein>
    <recommendedName>
        <fullName>Glycine and serine-rich protein 1</fullName>
    </recommendedName>
    <alternativeName>
        <fullName>Uncharacterized shell protein 1</fullName>
        <shortName>LUSP-1</shortName>
    </alternativeName>
</protein>
<proteinExistence type="evidence at protein level"/>